<sequence length="343" mass="36076">MITLAVDCMGGDHGPGVTLPACRQFLEHHPDARLILVGGQDSLQGLVHERVTHVVASEVVTMDDAVEVALRRKKDSSMRVAIQQVKDGVAHAAISAGNTGALMAIARYLLKTLDGIDRPAIATQMPNAQGGATTVLDLGANVDCTAEHLLQFAVMGSALVSVLQDRDEPLVGLLNIGEEVIKGNDVIKKAGGLLRSAAKSGDLNFHGNVEGNDIFKGTVDIVVCDGFVGNVALKASEGVASMIAGALKQEFSRNIFTKIAAIVAYPVLSAIMKRMDHRRYNGAALLGLRGLVFKSHGSADALAFEQALIRAYDAARNNLLDRVRARVAHAAPLLAAADAQPAS</sequence>
<protein>
    <recommendedName>
        <fullName evidence="1">Phosphate acyltransferase</fullName>
        <ecNumber evidence="1">2.3.1.274</ecNumber>
    </recommendedName>
    <alternativeName>
        <fullName evidence="1">Acyl-ACP phosphotransacylase</fullName>
    </alternativeName>
    <alternativeName>
        <fullName evidence="1">Acyl-[acyl-carrier-protein]--phosphate acyltransferase</fullName>
    </alternativeName>
    <alternativeName>
        <fullName evidence="1">Phosphate-acyl-ACP acyltransferase</fullName>
    </alternativeName>
</protein>
<feature type="chain" id="PRO_1000001711" description="Phosphate acyltransferase">
    <location>
        <begin position="1"/>
        <end position="343"/>
    </location>
</feature>
<accession>A1WAX9</accession>
<dbReference type="EC" id="2.3.1.274" evidence="1"/>
<dbReference type="EMBL" id="CP000539">
    <property type="protein sequence ID" value="ABM43404.1"/>
    <property type="molecule type" value="Genomic_DNA"/>
</dbReference>
<dbReference type="SMR" id="A1WAX9"/>
<dbReference type="STRING" id="232721.Ajs_3281"/>
<dbReference type="KEGG" id="ajs:Ajs_3281"/>
<dbReference type="eggNOG" id="COG0416">
    <property type="taxonomic scope" value="Bacteria"/>
</dbReference>
<dbReference type="HOGENOM" id="CLU_039379_1_0_4"/>
<dbReference type="UniPathway" id="UPA00085"/>
<dbReference type="Proteomes" id="UP000000645">
    <property type="component" value="Chromosome"/>
</dbReference>
<dbReference type="GO" id="GO:0005737">
    <property type="term" value="C:cytoplasm"/>
    <property type="evidence" value="ECO:0007669"/>
    <property type="project" value="UniProtKB-SubCell"/>
</dbReference>
<dbReference type="GO" id="GO:0043811">
    <property type="term" value="F:phosphate:acyl-[acyl carrier protein] acyltransferase activity"/>
    <property type="evidence" value="ECO:0007669"/>
    <property type="project" value="UniProtKB-UniRule"/>
</dbReference>
<dbReference type="GO" id="GO:0006633">
    <property type="term" value="P:fatty acid biosynthetic process"/>
    <property type="evidence" value="ECO:0007669"/>
    <property type="project" value="UniProtKB-UniRule"/>
</dbReference>
<dbReference type="GO" id="GO:0008654">
    <property type="term" value="P:phospholipid biosynthetic process"/>
    <property type="evidence" value="ECO:0007669"/>
    <property type="project" value="UniProtKB-KW"/>
</dbReference>
<dbReference type="Gene3D" id="3.40.718.10">
    <property type="entry name" value="Isopropylmalate Dehydrogenase"/>
    <property type="match status" value="1"/>
</dbReference>
<dbReference type="HAMAP" id="MF_00019">
    <property type="entry name" value="PlsX"/>
    <property type="match status" value="1"/>
</dbReference>
<dbReference type="InterPro" id="IPR003664">
    <property type="entry name" value="FA_synthesis"/>
</dbReference>
<dbReference type="InterPro" id="IPR012281">
    <property type="entry name" value="Phospholipid_synth_PlsX-like"/>
</dbReference>
<dbReference type="NCBIfam" id="TIGR00182">
    <property type="entry name" value="plsX"/>
    <property type="match status" value="1"/>
</dbReference>
<dbReference type="PANTHER" id="PTHR30100">
    <property type="entry name" value="FATTY ACID/PHOSPHOLIPID SYNTHESIS PROTEIN PLSX"/>
    <property type="match status" value="1"/>
</dbReference>
<dbReference type="PANTHER" id="PTHR30100:SF1">
    <property type="entry name" value="PHOSPHATE ACYLTRANSFERASE"/>
    <property type="match status" value="1"/>
</dbReference>
<dbReference type="Pfam" id="PF02504">
    <property type="entry name" value="FA_synthesis"/>
    <property type="match status" value="1"/>
</dbReference>
<dbReference type="PIRSF" id="PIRSF002465">
    <property type="entry name" value="Phsphlp_syn_PlsX"/>
    <property type="match status" value="1"/>
</dbReference>
<dbReference type="SUPFAM" id="SSF53659">
    <property type="entry name" value="Isocitrate/Isopropylmalate dehydrogenase-like"/>
    <property type="match status" value="1"/>
</dbReference>
<reference key="1">
    <citation type="submission" date="2006-12" db="EMBL/GenBank/DDBJ databases">
        <title>Complete sequence of chromosome 1 of Acidovorax sp. JS42.</title>
        <authorList>
            <person name="Copeland A."/>
            <person name="Lucas S."/>
            <person name="Lapidus A."/>
            <person name="Barry K."/>
            <person name="Detter J.C."/>
            <person name="Glavina del Rio T."/>
            <person name="Dalin E."/>
            <person name="Tice H."/>
            <person name="Pitluck S."/>
            <person name="Chertkov O."/>
            <person name="Brettin T."/>
            <person name="Bruce D."/>
            <person name="Han C."/>
            <person name="Tapia R."/>
            <person name="Gilna P."/>
            <person name="Schmutz J."/>
            <person name="Larimer F."/>
            <person name="Land M."/>
            <person name="Hauser L."/>
            <person name="Kyrpides N."/>
            <person name="Kim E."/>
            <person name="Stahl D."/>
            <person name="Richardson P."/>
        </authorList>
    </citation>
    <scope>NUCLEOTIDE SEQUENCE [LARGE SCALE GENOMIC DNA]</scope>
    <source>
        <strain>JS42</strain>
    </source>
</reference>
<name>PLSX_ACISJ</name>
<keyword id="KW-0963">Cytoplasm</keyword>
<keyword id="KW-0444">Lipid biosynthesis</keyword>
<keyword id="KW-0443">Lipid metabolism</keyword>
<keyword id="KW-0594">Phospholipid biosynthesis</keyword>
<keyword id="KW-1208">Phospholipid metabolism</keyword>
<keyword id="KW-0808">Transferase</keyword>
<organism>
    <name type="scientific">Acidovorax sp. (strain JS42)</name>
    <dbReference type="NCBI Taxonomy" id="232721"/>
    <lineage>
        <taxon>Bacteria</taxon>
        <taxon>Pseudomonadati</taxon>
        <taxon>Pseudomonadota</taxon>
        <taxon>Betaproteobacteria</taxon>
        <taxon>Burkholderiales</taxon>
        <taxon>Comamonadaceae</taxon>
        <taxon>Acidovorax</taxon>
    </lineage>
</organism>
<gene>
    <name evidence="1" type="primary">plsX</name>
    <name type="ordered locus">Ajs_3281</name>
</gene>
<evidence type="ECO:0000255" key="1">
    <source>
        <dbReference type="HAMAP-Rule" id="MF_00019"/>
    </source>
</evidence>
<proteinExistence type="inferred from homology"/>
<comment type="function">
    <text evidence="1">Catalyzes the reversible formation of acyl-phosphate (acyl-PO(4)) from acyl-[acyl-carrier-protein] (acyl-ACP). This enzyme utilizes acyl-ACP as fatty acyl donor, but not acyl-CoA.</text>
</comment>
<comment type="catalytic activity">
    <reaction evidence="1">
        <text>a fatty acyl-[ACP] + phosphate = an acyl phosphate + holo-[ACP]</text>
        <dbReference type="Rhea" id="RHEA:42292"/>
        <dbReference type="Rhea" id="RHEA-COMP:9685"/>
        <dbReference type="Rhea" id="RHEA-COMP:14125"/>
        <dbReference type="ChEBI" id="CHEBI:43474"/>
        <dbReference type="ChEBI" id="CHEBI:59918"/>
        <dbReference type="ChEBI" id="CHEBI:64479"/>
        <dbReference type="ChEBI" id="CHEBI:138651"/>
        <dbReference type="EC" id="2.3.1.274"/>
    </reaction>
</comment>
<comment type="pathway">
    <text evidence="1">Lipid metabolism; phospholipid metabolism.</text>
</comment>
<comment type="subunit">
    <text evidence="1">Homodimer. Probably interacts with PlsY.</text>
</comment>
<comment type="subcellular location">
    <subcellularLocation>
        <location evidence="1">Cytoplasm</location>
    </subcellularLocation>
    <text evidence="1">Associated with the membrane possibly through PlsY.</text>
</comment>
<comment type="similarity">
    <text evidence="1">Belongs to the PlsX family.</text>
</comment>